<accession>P40282</accession>
<evidence type="ECO:0000256" key="1">
    <source>
        <dbReference type="SAM" id="MobiDB-lite"/>
    </source>
</evidence>
<evidence type="ECO:0000305" key="2"/>
<comment type="function">
    <text>Core component of nucleosome. Nucleosomes wrap and compact DNA into chromatin, limiting DNA accessibility to the cellular machineries which require DNA as a template. Histones thereby play a central role in transcription regulation, DNA repair, DNA replication and chromosomal stability. DNA accessibility is regulated via a complex set of post-translational modifications of histones, also called histone code, and nucleosome remodeling.</text>
</comment>
<comment type="subunit">
    <text>The nucleosome is a histone octamer containing two molecules each of H2A, H2B, H3 and H4 assembled in one H3-H4 heterotetramer and two H2A-H2B heterodimers. The octamer wraps approximately 147 bp of DNA.</text>
</comment>
<comment type="subcellular location">
    <subcellularLocation>
        <location>Nucleus</location>
    </subcellularLocation>
    <subcellularLocation>
        <location>Chromosome</location>
    </subcellularLocation>
</comment>
<comment type="similarity">
    <text evidence="2">Belongs to the histone H2A family.</text>
</comment>
<keyword id="KW-0158">Chromosome</keyword>
<keyword id="KW-0238">DNA-binding</keyword>
<keyword id="KW-0544">Nucleosome core</keyword>
<keyword id="KW-0539">Nucleus</keyword>
<name>H2A_PLAFA</name>
<protein>
    <recommendedName>
        <fullName>Histone H2A</fullName>
    </recommendedName>
</protein>
<sequence length="132" mass="14122">MSAKGKTGRKKASKGTSNSAKAGLQFPVGRIGRYLKKGKYAKRVGAGAPVYLAAVLEYLCAEILELAGNAARDNKKSRITPRHIQLAVRNDEELNKFLAGVTFASGGVLPNIHNVLLPKKSQLKAGTANQDY</sequence>
<dbReference type="EMBL" id="M86865">
    <property type="protein sequence ID" value="AAA29612.1"/>
    <property type="molecule type" value="mRNA"/>
</dbReference>
<dbReference type="PIR" id="A45564">
    <property type="entry name" value="A45564"/>
</dbReference>
<dbReference type="SMR" id="P40282"/>
<dbReference type="EnsemblProtists" id="CAG24993">
    <property type="protein sequence ID" value="CAG24993"/>
    <property type="gene ID" value="PF3D7_0617800"/>
</dbReference>
<dbReference type="VEuPathDB" id="PlasmoDB:PF3D7_0617800"/>
<dbReference type="VEuPathDB" id="PlasmoDB:Pf7G8-2_000170100"/>
<dbReference type="VEuPathDB" id="PlasmoDB:Pf7G8_060022700"/>
<dbReference type="VEuPathDB" id="PlasmoDB:PfCD01_060023200"/>
<dbReference type="VEuPathDB" id="PlasmoDB:PfDd2_060022500"/>
<dbReference type="VEuPathDB" id="PlasmoDB:PfGA01_060022800"/>
<dbReference type="VEuPathDB" id="PlasmoDB:PfGB4_060022200"/>
<dbReference type="VEuPathDB" id="PlasmoDB:PfGN01_060023500"/>
<dbReference type="VEuPathDB" id="PlasmoDB:PfHB3_060022000"/>
<dbReference type="VEuPathDB" id="PlasmoDB:PfIT_060021600"/>
<dbReference type="VEuPathDB" id="PlasmoDB:PfKE01_060023900"/>
<dbReference type="VEuPathDB" id="PlasmoDB:PfKH01_060024800"/>
<dbReference type="VEuPathDB" id="PlasmoDB:PfKH02_060024300"/>
<dbReference type="VEuPathDB" id="PlasmoDB:PfML01_000104000"/>
<dbReference type="VEuPathDB" id="PlasmoDB:PfML01_060021600"/>
<dbReference type="VEuPathDB" id="PlasmoDB:PfNF135_060022000"/>
<dbReference type="VEuPathDB" id="PlasmoDB:PfNF166_060022200"/>
<dbReference type="VEuPathDB" id="PlasmoDB:PfNF54_060022800"/>
<dbReference type="VEuPathDB" id="PlasmoDB:PfSD01_060021700"/>
<dbReference type="VEuPathDB" id="PlasmoDB:PfSN01_060022700"/>
<dbReference type="VEuPathDB" id="PlasmoDB:PfTG01_060023100"/>
<dbReference type="OMA" id="CALESQH"/>
<dbReference type="GO" id="GO:0000786">
    <property type="term" value="C:nucleosome"/>
    <property type="evidence" value="ECO:0007669"/>
    <property type="project" value="UniProtKB-KW"/>
</dbReference>
<dbReference type="GO" id="GO:0005634">
    <property type="term" value="C:nucleus"/>
    <property type="evidence" value="ECO:0007669"/>
    <property type="project" value="UniProtKB-SubCell"/>
</dbReference>
<dbReference type="GO" id="GO:0003677">
    <property type="term" value="F:DNA binding"/>
    <property type="evidence" value="ECO:0007669"/>
    <property type="project" value="UniProtKB-KW"/>
</dbReference>
<dbReference type="GO" id="GO:0046982">
    <property type="term" value="F:protein heterodimerization activity"/>
    <property type="evidence" value="ECO:0007669"/>
    <property type="project" value="InterPro"/>
</dbReference>
<dbReference type="GO" id="GO:0030527">
    <property type="term" value="F:structural constituent of chromatin"/>
    <property type="evidence" value="ECO:0007669"/>
    <property type="project" value="InterPro"/>
</dbReference>
<dbReference type="CDD" id="cd00074">
    <property type="entry name" value="HFD_H2A"/>
    <property type="match status" value="1"/>
</dbReference>
<dbReference type="FunFam" id="1.10.20.10:FF:000009">
    <property type="entry name" value="Histone H2A"/>
    <property type="match status" value="1"/>
</dbReference>
<dbReference type="Gene3D" id="1.10.20.10">
    <property type="entry name" value="Histone, subunit A"/>
    <property type="match status" value="1"/>
</dbReference>
<dbReference type="InterPro" id="IPR009072">
    <property type="entry name" value="Histone-fold"/>
</dbReference>
<dbReference type="InterPro" id="IPR002119">
    <property type="entry name" value="Histone_H2A"/>
</dbReference>
<dbReference type="InterPro" id="IPR007125">
    <property type="entry name" value="Histone_H2A/H2B/H3"/>
</dbReference>
<dbReference type="InterPro" id="IPR032454">
    <property type="entry name" value="Histone_H2A_C"/>
</dbReference>
<dbReference type="InterPro" id="IPR032458">
    <property type="entry name" value="Histone_H2A_CS"/>
</dbReference>
<dbReference type="PANTHER" id="PTHR23430">
    <property type="entry name" value="HISTONE H2A"/>
    <property type="match status" value="1"/>
</dbReference>
<dbReference type="Pfam" id="PF00125">
    <property type="entry name" value="Histone"/>
    <property type="match status" value="1"/>
</dbReference>
<dbReference type="Pfam" id="PF16211">
    <property type="entry name" value="Histone_H2A_C"/>
    <property type="match status" value="1"/>
</dbReference>
<dbReference type="PRINTS" id="PR00620">
    <property type="entry name" value="HISTONEH2A"/>
</dbReference>
<dbReference type="SMART" id="SM00414">
    <property type="entry name" value="H2A"/>
    <property type="match status" value="1"/>
</dbReference>
<dbReference type="SUPFAM" id="SSF47113">
    <property type="entry name" value="Histone-fold"/>
    <property type="match status" value="1"/>
</dbReference>
<dbReference type="PROSITE" id="PS00046">
    <property type="entry name" value="HISTONE_H2A"/>
    <property type="match status" value="1"/>
</dbReference>
<feature type="chain" id="PRO_0000055269" description="Histone H2A">
    <location>
        <begin position="1"/>
        <end position="132"/>
    </location>
</feature>
<feature type="region of interest" description="Disordered" evidence="1">
    <location>
        <begin position="1"/>
        <end position="21"/>
    </location>
</feature>
<feature type="compositionally biased region" description="Basic residues" evidence="1">
    <location>
        <begin position="1"/>
        <end position="13"/>
    </location>
</feature>
<reference key="1">
    <citation type="journal article" date="1992" name="Mol. Biochem. Parasitol.">
        <title>Identification of a Plasmodium falciparum histone 2A gene.</title>
        <authorList>
            <person name="Creedon K.A."/>
            <person name="Kaslow D.C."/>
            <person name="Rathod P.K."/>
            <person name="Wellems T.E."/>
        </authorList>
    </citation>
    <scope>NUCLEOTIDE SEQUENCE [MRNA]</scope>
</reference>
<organism>
    <name type="scientific">Plasmodium falciparum</name>
    <dbReference type="NCBI Taxonomy" id="5833"/>
    <lineage>
        <taxon>Eukaryota</taxon>
        <taxon>Sar</taxon>
        <taxon>Alveolata</taxon>
        <taxon>Apicomplexa</taxon>
        <taxon>Aconoidasida</taxon>
        <taxon>Haemosporida</taxon>
        <taxon>Plasmodiidae</taxon>
        <taxon>Plasmodium</taxon>
        <taxon>Plasmodium (Laverania)</taxon>
    </lineage>
</organism>
<proteinExistence type="evidence at transcript level"/>